<name>PHEA1_CHRSP</name>
<organism>
    <name type="scientific">Chroomonas sp</name>
    <dbReference type="NCBI Taxonomy" id="3029"/>
    <lineage>
        <taxon>Eukaryota</taxon>
        <taxon>Cryptophyceae</taxon>
        <taxon>Pyrenomonadales</taxon>
        <taxon>Chroomonadaceae</taxon>
        <taxon>Chroomonas</taxon>
    </lineage>
</organism>
<accession>P23816</accession>
<proteinExistence type="evidence at protein level"/>
<feature type="chain" id="PRO_0000199211" description="Phycocyanin-645 alpha-1 chain">
    <location>
        <begin position="1"/>
        <end position="80"/>
    </location>
</feature>
<feature type="binding site" evidence="1">
    <location>
        <position position="16"/>
    </location>
    <ligand>
        <name>(2R,3E)-phycocyanobilin</name>
        <dbReference type="ChEBI" id="CHEBI:85275"/>
        <note>ligand shared with beta subunit</note>
    </ligand>
</feature>
<feature type="binding site" description="covalent" evidence="1">
    <location>
        <position position="18"/>
    </location>
    <ligand>
        <name>mesobiliverdin</name>
        <dbReference type="ChEBI" id="CHEBI:189061"/>
        <note>ligand shared with beta subunit</note>
    </ligand>
</feature>
<feature type="binding site" evidence="1">
    <location>
        <position position="24"/>
    </location>
    <ligand>
        <name>mesobiliverdin</name>
        <dbReference type="ChEBI" id="CHEBI:189061"/>
        <note>ligand shared with beta subunit</note>
    </ligand>
</feature>
<feature type="binding site" evidence="1">
    <location>
        <position position="25"/>
    </location>
    <ligand>
        <name>mesobiliverdin</name>
        <dbReference type="ChEBI" id="CHEBI:189061"/>
        <note>ligand shared with beta subunit</note>
    </ligand>
</feature>
<feature type="binding site" evidence="1">
    <location>
        <position position="40"/>
    </location>
    <ligand>
        <name>mesobiliverdin</name>
        <dbReference type="ChEBI" id="CHEBI:189061"/>
        <note>ligand shared with beta subunit</note>
    </ligand>
</feature>
<feature type="binding site" evidence="1">
    <location>
        <position position="71"/>
    </location>
    <ligand>
        <name>15,16-dihydrobiliverdin</name>
        <dbReference type="ChEBI" id="CHEBI:57899"/>
        <note>ligand shared with beta subunit</note>
    </ligand>
</feature>
<feature type="binding site" evidence="1">
    <location>
        <position position="73"/>
    </location>
    <ligand>
        <name>15,16-dihydrobiliverdin</name>
        <dbReference type="ChEBI" id="CHEBI:57899"/>
        <note>ligand shared with beta subunit</note>
    </ligand>
</feature>
<evidence type="ECO:0000250" key="1">
    <source>
        <dbReference type="UniProtKB" id="U5T880"/>
    </source>
</evidence>
<evidence type="ECO:0000305" key="2"/>
<sequence>KNGDLRAPYVEIFDARGCDAKNSQYTGPKSGDMNDDQCVKVSMAVPKVSEATAEKKRQEFLGFKETAINVPQIAGKTKKY</sequence>
<reference key="1">
    <citation type="journal article" date="1990" name="Biol. Chem. Hoppe-Seyler">
        <title>The complete amino-acid sequence and the phylogenetic origin of phycocyanin-645 from the cryptophytan alga Chroomonas sp.</title>
        <authorList>
            <person name="Sidler W."/>
            <person name="Nutt H."/>
            <person name="Kumpf B."/>
            <person name="Frank G."/>
            <person name="Suter F."/>
            <person name="Brenzel A."/>
            <person name="Wehrmeyer W."/>
            <person name="Zuber H."/>
        </authorList>
    </citation>
    <scope>PROTEIN SEQUENCE</scope>
</reference>
<reference key="2">
    <citation type="journal article" date="1985" name="Biol. Chem. Hoppe-Seyler">
        <title>Structural studies on cryptomonad biliprotein subunits. Two different alpha-subunits in Chroomonas phycocyanin-645 and Cryptomonas phycoerythrin-545.</title>
        <authorList>
            <person name="Sidler W."/>
            <person name="Kumpf B."/>
            <person name="Suter F."/>
            <person name="Morisset W."/>
            <person name="Wehrmeyer W."/>
            <person name="Zuber H."/>
        </authorList>
    </citation>
    <scope>PROTEIN SEQUENCE OF 1-69</scope>
</reference>
<keyword id="KW-0089">Bile pigment</keyword>
<keyword id="KW-0150">Chloroplast</keyword>
<keyword id="KW-0157">Chromophore</keyword>
<keyword id="KW-0903">Direct protein sequencing</keyword>
<keyword id="KW-0249">Electron transport</keyword>
<keyword id="KW-0472">Membrane</keyword>
<keyword id="KW-0602">Photosynthesis</keyword>
<keyword id="KW-0934">Plastid</keyword>
<keyword id="KW-0793">Thylakoid</keyword>
<keyword id="KW-0813">Transport</keyword>
<protein>
    <recommendedName>
        <fullName>Phycocyanin-645 alpha-1 chain</fullName>
        <shortName>PC-645</shortName>
    </recommendedName>
</protein>
<comment type="function">
    <text evidence="2">Light-harvesting photosynthetic tetrapyrrole chromophore-protein from the phycobiliprotein complex.</text>
</comment>
<comment type="subunit">
    <text evidence="1">Heterotetramer of 2 different alpha chains and 2 identical beta chains which form 2 alpha-beta heterodimers within the heterotetramer.</text>
</comment>
<comment type="subcellular location">
    <subcellularLocation>
        <location evidence="2">Plastid</location>
        <location evidence="2">Chloroplast thylakoid membrane</location>
        <topology evidence="2">Peripheral membrane protein</topology>
        <orientation evidence="2">Lumenal side</orientation>
    </subcellularLocation>
</comment>
<comment type="PTM">
    <text evidence="1">Contains one phycocyanobilin chromophore, one mesobiliverdin chromophore and one 15,16-dihydrobiliverdin chromophore with binding mediated by both the alpha and beta subunits.</text>
</comment>
<comment type="miscellaneous">
    <text>The light-harvesting system in Cryptophytes contains phycobiliprotein complexes. Unusually they are composed of either phycoerythrin (CPE) or phycocyanin (CPC) but never allophycocyanin (APC), with only one type of biliprotein being present in any one species. Unlike cyanobacteria or red algae these proteins are not arranged into higher-order phycobilisome complexes, and they are found in the thylakoid lumen.</text>
</comment>
<comment type="similarity">
    <text evidence="2">Belongs to the phycoerythrin family.</text>
</comment>
<dbReference type="PIR" id="S10603">
    <property type="entry name" value="S10603"/>
</dbReference>
<dbReference type="SMR" id="P23816"/>
<dbReference type="GO" id="GO:0009535">
    <property type="term" value="C:chloroplast thylakoid membrane"/>
    <property type="evidence" value="ECO:0007669"/>
    <property type="project" value="UniProtKB-SubCell"/>
</dbReference>
<dbReference type="GO" id="GO:0030089">
    <property type="term" value="C:phycobilisome"/>
    <property type="evidence" value="ECO:0007669"/>
    <property type="project" value="InterPro"/>
</dbReference>
<dbReference type="GO" id="GO:0015979">
    <property type="term" value="P:photosynthesis"/>
    <property type="evidence" value="ECO:0007669"/>
    <property type="project" value="UniProtKB-KW"/>
</dbReference>
<dbReference type="Gene3D" id="3.90.510.10">
    <property type="entry name" value="Phycoerythrin alpha chain"/>
    <property type="match status" value="1"/>
</dbReference>
<dbReference type="InterPro" id="IPR011070">
    <property type="entry name" value="Globular_prot_asu/bsu"/>
</dbReference>
<dbReference type="InterPro" id="IPR037011">
    <property type="entry name" value="Phycoerythr-like_a_sf"/>
</dbReference>
<dbReference type="InterPro" id="IPR004228">
    <property type="entry name" value="Phycoerythr_a"/>
</dbReference>
<dbReference type="Pfam" id="PF02972">
    <property type="entry name" value="Phycoerythr_ab"/>
    <property type="match status" value="1"/>
</dbReference>
<dbReference type="SUPFAM" id="SSF56568">
    <property type="entry name" value="Non-globular alpha+beta subunits of globular proteins"/>
    <property type="match status" value="1"/>
</dbReference>